<keyword id="KW-0963">Cytoplasm</keyword>
<keyword id="KW-0489">Methyltransferase</keyword>
<keyword id="KW-0949">S-adenosyl-L-methionine</keyword>
<keyword id="KW-0808">Transferase</keyword>
<name>TPMT_VIBC3</name>
<evidence type="ECO:0000255" key="1">
    <source>
        <dbReference type="HAMAP-Rule" id="MF_00812"/>
    </source>
</evidence>
<sequence>MRDPEFWHNKWAANQIGFHLEDVNPLLIRFWSDLAPKRSEKVLVPLCGKSEDLIWLANQHDSVQGVELSQIAVRSFFAEHFYTPTVTRLNAQHELYQFDELTLFTGDFFTAPVESVDLVYDRAALVALPEEMRTEYAQRVLQLLKPGGRILLVSMDYVQTELSGPPFSVPEAEIRTLFMGCEVRRVYQDTSIDPHLNKRTQAGLSRFAEEVWVIEKSE</sequence>
<gene>
    <name evidence="1" type="primary">tpm</name>
    <name type="ordered locus">VC0395_A0849</name>
    <name type="ordered locus">VC395_1345</name>
</gene>
<proteinExistence type="inferred from homology"/>
<protein>
    <recommendedName>
        <fullName evidence="1">Thiopurine S-methyltransferase</fullName>
        <ecNumber evidence="1">2.1.1.67</ecNumber>
    </recommendedName>
    <alternativeName>
        <fullName evidence="1">Thiopurine methyltransferase</fullName>
    </alternativeName>
</protein>
<organism>
    <name type="scientific">Vibrio cholerae serotype O1 (strain ATCC 39541 / Classical Ogawa 395 / O395)</name>
    <dbReference type="NCBI Taxonomy" id="345073"/>
    <lineage>
        <taxon>Bacteria</taxon>
        <taxon>Pseudomonadati</taxon>
        <taxon>Pseudomonadota</taxon>
        <taxon>Gammaproteobacteria</taxon>
        <taxon>Vibrionales</taxon>
        <taxon>Vibrionaceae</taxon>
        <taxon>Vibrio</taxon>
    </lineage>
</organism>
<reference key="1">
    <citation type="submission" date="2007-03" db="EMBL/GenBank/DDBJ databases">
        <authorList>
            <person name="Heidelberg J."/>
        </authorList>
    </citation>
    <scope>NUCLEOTIDE SEQUENCE [LARGE SCALE GENOMIC DNA]</scope>
    <source>
        <strain>ATCC 39541 / Classical Ogawa 395 / O395</strain>
    </source>
</reference>
<reference key="2">
    <citation type="journal article" date="2008" name="PLoS ONE">
        <title>A recalibrated molecular clock and independent origins for the cholera pandemic clones.</title>
        <authorList>
            <person name="Feng L."/>
            <person name="Reeves P.R."/>
            <person name="Lan R."/>
            <person name="Ren Y."/>
            <person name="Gao C."/>
            <person name="Zhou Z."/>
            <person name="Ren Y."/>
            <person name="Cheng J."/>
            <person name="Wang W."/>
            <person name="Wang J."/>
            <person name="Qian W."/>
            <person name="Li D."/>
            <person name="Wang L."/>
        </authorList>
    </citation>
    <scope>NUCLEOTIDE SEQUENCE [LARGE SCALE GENOMIC DNA]</scope>
    <source>
        <strain>ATCC 39541 / Classical Ogawa 395 / O395</strain>
    </source>
</reference>
<dbReference type="EC" id="2.1.1.67" evidence="1"/>
<dbReference type="EMBL" id="CP000627">
    <property type="protein sequence ID" value="ABQ22074.1"/>
    <property type="molecule type" value="Genomic_DNA"/>
</dbReference>
<dbReference type="EMBL" id="CP001235">
    <property type="protein sequence ID" value="ACP09353.1"/>
    <property type="molecule type" value="Genomic_DNA"/>
</dbReference>
<dbReference type="RefSeq" id="WP_001205536.1">
    <property type="nucleotide sequence ID" value="NZ_JAACZH010000002.1"/>
</dbReference>
<dbReference type="SMR" id="A5F1V4"/>
<dbReference type="KEGG" id="vco:VC0395_A0849"/>
<dbReference type="KEGG" id="vcr:VC395_1345"/>
<dbReference type="PATRIC" id="fig|345073.21.peg.1308"/>
<dbReference type="eggNOG" id="COG0500">
    <property type="taxonomic scope" value="Bacteria"/>
</dbReference>
<dbReference type="HOGENOM" id="CLU_085515_1_0_6"/>
<dbReference type="OrthoDB" id="9778208at2"/>
<dbReference type="Proteomes" id="UP000000249">
    <property type="component" value="Chromosome 2"/>
</dbReference>
<dbReference type="GO" id="GO:0005737">
    <property type="term" value="C:cytoplasm"/>
    <property type="evidence" value="ECO:0007669"/>
    <property type="project" value="UniProtKB-SubCell"/>
</dbReference>
<dbReference type="GO" id="GO:0008119">
    <property type="term" value="F:thiopurine S-methyltransferase activity"/>
    <property type="evidence" value="ECO:0007669"/>
    <property type="project" value="UniProtKB-UniRule"/>
</dbReference>
<dbReference type="GO" id="GO:0032259">
    <property type="term" value="P:methylation"/>
    <property type="evidence" value="ECO:0007669"/>
    <property type="project" value="UniProtKB-KW"/>
</dbReference>
<dbReference type="GO" id="GO:0010038">
    <property type="term" value="P:response to metal ion"/>
    <property type="evidence" value="ECO:0007669"/>
    <property type="project" value="InterPro"/>
</dbReference>
<dbReference type="CDD" id="cd02440">
    <property type="entry name" value="AdoMet_MTases"/>
    <property type="match status" value="1"/>
</dbReference>
<dbReference type="FunFam" id="3.40.50.150:FF:000101">
    <property type="entry name" value="Thiopurine S-methyltransferase"/>
    <property type="match status" value="1"/>
</dbReference>
<dbReference type="Gene3D" id="3.40.50.150">
    <property type="entry name" value="Vaccinia Virus protein VP39"/>
    <property type="match status" value="1"/>
</dbReference>
<dbReference type="HAMAP" id="MF_00812">
    <property type="entry name" value="Thiopur_methtran"/>
    <property type="match status" value="1"/>
</dbReference>
<dbReference type="InterPro" id="IPR029063">
    <property type="entry name" value="SAM-dependent_MTases_sf"/>
</dbReference>
<dbReference type="InterPro" id="IPR022474">
    <property type="entry name" value="Thiopur_S-MeTfrase_Se/Te_detox"/>
</dbReference>
<dbReference type="InterPro" id="IPR025835">
    <property type="entry name" value="Thiopurine_S-MeTrfase"/>
</dbReference>
<dbReference type="InterPro" id="IPR008854">
    <property type="entry name" value="TPMT"/>
</dbReference>
<dbReference type="NCBIfam" id="NF009732">
    <property type="entry name" value="PRK13255.1"/>
    <property type="match status" value="1"/>
</dbReference>
<dbReference type="NCBIfam" id="TIGR03840">
    <property type="entry name" value="TMPT_Se_Te"/>
    <property type="match status" value="1"/>
</dbReference>
<dbReference type="PANTHER" id="PTHR10259">
    <property type="entry name" value="THIOPURINE S-METHYLTRANSFERASE"/>
    <property type="match status" value="1"/>
</dbReference>
<dbReference type="PANTHER" id="PTHR10259:SF11">
    <property type="entry name" value="THIOPURINE S-METHYLTRANSFERASE"/>
    <property type="match status" value="1"/>
</dbReference>
<dbReference type="Pfam" id="PF05724">
    <property type="entry name" value="TPMT"/>
    <property type="match status" value="1"/>
</dbReference>
<dbReference type="PIRSF" id="PIRSF023956">
    <property type="entry name" value="Thiopurine_S-methyltransferase"/>
    <property type="match status" value="1"/>
</dbReference>
<dbReference type="SUPFAM" id="SSF53335">
    <property type="entry name" value="S-adenosyl-L-methionine-dependent methyltransferases"/>
    <property type="match status" value="1"/>
</dbReference>
<dbReference type="PROSITE" id="PS51585">
    <property type="entry name" value="SAM_MT_TPMT"/>
    <property type="match status" value="1"/>
</dbReference>
<comment type="catalytic activity">
    <reaction evidence="1">
        <text>S-adenosyl-L-methionine + a thiopurine = S-adenosyl-L-homocysteine + a thiopurine S-methylether.</text>
        <dbReference type="EC" id="2.1.1.67"/>
    </reaction>
</comment>
<comment type="subcellular location">
    <subcellularLocation>
        <location evidence="1">Cytoplasm</location>
    </subcellularLocation>
</comment>
<comment type="similarity">
    <text evidence="1">Belongs to the class I-like SAM-binding methyltransferase superfamily. TPMT family.</text>
</comment>
<feature type="chain" id="PRO_1000072855" description="Thiopurine S-methyltransferase">
    <location>
        <begin position="1"/>
        <end position="218"/>
    </location>
</feature>
<feature type="binding site" evidence="1">
    <location>
        <position position="11"/>
    </location>
    <ligand>
        <name>S-adenosyl-L-methionine</name>
        <dbReference type="ChEBI" id="CHEBI:59789"/>
    </ligand>
</feature>
<feature type="binding site" evidence="1">
    <location>
        <position position="46"/>
    </location>
    <ligand>
        <name>S-adenosyl-L-methionine</name>
        <dbReference type="ChEBI" id="CHEBI:59789"/>
    </ligand>
</feature>
<feature type="binding site" evidence="1">
    <location>
        <position position="67"/>
    </location>
    <ligand>
        <name>S-adenosyl-L-methionine</name>
        <dbReference type="ChEBI" id="CHEBI:59789"/>
    </ligand>
</feature>
<feature type="binding site" evidence="1">
    <location>
        <position position="122"/>
    </location>
    <ligand>
        <name>S-adenosyl-L-methionine</name>
        <dbReference type="ChEBI" id="CHEBI:59789"/>
    </ligand>
</feature>
<accession>A5F1V4</accession>
<accession>C3LZY7</accession>